<organism>
    <name type="scientific">Staphylococcus epidermidis (strain ATCC 35984 / DSM 28319 / BCRC 17069 / CCUG 31568 / BM 3577 / RP62A)</name>
    <dbReference type="NCBI Taxonomy" id="176279"/>
    <lineage>
        <taxon>Bacteria</taxon>
        <taxon>Bacillati</taxon>
        <taxon>Bacillota</taxon>
        <taxon>Bacilli</taxon>
        <taxon>Bacillales</taxon>
        <taxon>Staphylococcaceae</taxon>
        <taxon>Staphylococcus</taxon>
    </lineage>
</organism>
<name>SPXH_STAEQ</name>
<feature type="chain" id="PRO_0000278698" description="ClpXP adapter protein SpxH">
    <location>
        <begin position="1"/>
        <end position="265"/>
    </location>
</feature>
<accession>Q5HQG8</accession>
<dbReference type="EMBL" id="CP000029">
    <property type="protein sequence ID" value="AAW53990.1"/>
    <property type="molecule type" value="Genomic_DNA"/>
</dbReference>
<dbReference type="SMR" id="Q5HQG8"/>
<dbReference type="STRING" id="176279.SERP0581"/>
<dbReference type="KEGG" id="ser:SERP0581"/>
<dbReference type="eggNOG" id="COG2761">
    <property type="taxonomic scope" value="Bacteria"/>
</dbReference>
<dbReference type="HOGENOM" id="CLU_069785_0_0_9"/>
<dbReference type="Proteomes" id="UP000000531">
    <property type="component" value="Chromosome"/>
</dbReference>
<dbReference type="GO" id="GO:0005737">
    <property type="term" value="C:cytoplasm"/>
    <property type="evidence" value="ECO:0007669"/>
    <property type="project" value="UniProtKB-SubCell"/>
</dbReference>
<dbReference type="CDD" id="cd03025">
    <property type="entry name" value="DsbA_FrnE_like"/>
    <property type="match status" value="1"/>
</dbReference>
<dbReference type="Gene3D" id="3.40.30.10">
    <property type="entry name" value="Glutaredoxin"/>
    <property type="match status" value="1"/>
</dbReference>
<dbReference type="HAMAP" id="MF_02245">
    <property type="entry name" value="Adapter_SpxH"/>
    <property type="match status" value="1"/>
</dbReference>
<dbReference type="InterPro" id="IPR046404">
    <property type="entry name" value="Adapter_SpxH"/>
</dbReference>
<dbReference type="InterPro" id="IPR036249">
    <property type="entry name" value="Thioredoxin-like_sf"/>
</dbReference>
<dbReference type="PANTHER" id="PTHR13887:SF47">
    <property type="entry name" value="CLPXP ADAPTER PROTEIN SPXH"/>
    <property type="match status" value="1"/>
</dbReference>
<dbReference type="PANTHER" id="PTHR13887">
    <property type="entry name" value="GLUTATHIONE S-TRANSFERASE KAPPA"/>
    <property type="match status" value="1"/>
</dbReference>
<dbReference type="Pfam" id="PF13743">
    <property type="entry name" value="Thioredoxin_5"/>
    <property type="match status" value="1"/>
</dbReference>
<dbReference type="SUPFAM" id="SSF52833">
    <property type="entry name" value="Thioredoxin-like"/>
    <property type="match status" value="1"/>
</dbReference>
<gene>
    <name evidence="1" type="primary">spxH</name>
    <name type="ordered locus">SERP0581</name>
</gene>
<comment type="function">
    <text evidence="1">Adapter protein required for efficient degradation of Spx by ClpXP under non-stress conditions. Interaction with Spx stabilizes Spx and exposes the C-terminus of Spx for recognition and proteolysis by ClpXP.</text>
</comment>
<comment type="subunit">
    <text evidence="1">Interacts with Spx.</text>
</comment>
<comment type="subcellular location">
    <subcellularLocation>
        <location evidence="1">Cytoplasm</location>
    </subcellularLocation>
</comment>
<comment type="similarity">
    <text evidence="1">Belongs to the SpxH family.</text>
</comment>
<keyword id="KW-0963">Cytoplasm</keyword>
<keyword id="KW-1185">Reference proteome</keyword>
<protein>
    <recommendedName>
        <fullName evidence="1">ClpXP adapter protein SpxH</fullName>
    </recommendedName>
</protein>
<evidence type="ECO:0000255" key="1">
    <source>
        <dbReference type="HAMAP-Rule" id="MF_02245"/>
    </source>
</evidence>
<reference key="1">
    <citation type="journal article" date="2005" name="J. Bacteriol.">
        <title>Insights on evolution of virulence and resistance from the complete genome analysis of an early methicillin-resistant Staphylococcus aureus strain and a biofilm-producing methicillin-resistant Staphylococcus epidermidis strain.</title>
        <authorList>
            <person name="Gill S.R."/>
            <person name="Fouts D.E."/>
            <person name="Archer G.L."/>
            <person name="Mongodin E.F."/>
            <person name="DeBoy R.T."/>
            <person name="Ravel J."/>
            <person name="Paulsen I.T."/>
            <person name="Kolonay J.F."/>
            <person name="Brinkac L.M."/>
            <person name="Beanan M.J."/>
            <person name="Dodson R.J."/>
            <person name="Daugherty S.C."/>
            <person name="Madupu R."/>
            <person name="Angiuoli S.V."/>
            <person name="Durkin A.S."/>
            <person name="Haft D.H."/>
            <person name="Vamathevan J.J."/>
            <person name="Khouri H."/>
            <person name="Utterback T.R."/>
            <person name="Lee C."/>
            <person name="Dimitrov G."/>
            <person name="Jiang L."/>
            <person name="Qin H."/>
            <person name="Weidman J."/>
            <person name="Tran K."/>
            <person name="Kang K.H."/>
            <person name="Hance I.R."/>
            <person name="Nelson K.E."/>
            <person name="Fraser C.M."/>
        </authorList>
    </citation>
    <scope>NUCLEOTIDE SEQUENCE [LARGE SCALE GENOMIC DNA]</scope>
    <source>
        <strain>ATCC 35984 / DSM 28319 / BCRC 17069 / CCUG 31568 / BM 3577 / RP62A</strain>
    </source>
</reference>
<sequence length="265" mass="31250">MAEELRIMENKSREDTNLSPVSKIEIYSFFDPFSKDCFKLSAILSKLRIEYNKYIKVRHILNPSLKVLTKCQAQSTSDFDNIALAYKAAELQGRIRAERFIHLMQNEIIPKRDIITEDMISDCINNAGIDYQVFKEDLQKDKLTDSLKVDLHIAREMEIEQAPSLVFFSENVHEEGLKVEGLYPYHIYTYIINELMGQPIEKNLPPKLEYYIQKKQLVTMEELLTIYEWPEKLLNKELKKLTLQQKVEKLQYPEGEFWKSKMPQC</sequence>
<proteinExistence type="inferred from homology"/>